<accession>P16913</accession>
<accession>Q76ZM2</accession>
<dbReference type="EC" id="2.7.11.1" evidence="6"/>
<dbReference type="EMBL" id="D11079">
    <property type="protein sequence ID" value="BAA01831.1"/>
    <property type="molecule type" value="Genomic_DNA"/>
</dbReference>
<dbReference type="EMBL" id="J05178">
    <property type="protein sequence ID" value="AAA47963.1"/>
    <property type="molecule type" value="Genomic_DNA"/>
</dbReference>
<dbReference type="EMBL" id="D00628">
    <property type="protein sequence ID" value="BAA00519.1"/>
    <property type="molecule type" value="Genomic_DNA"/>
</dbReference>
<dbReference type="EMBL" id="AY243312">
    <property type="protein sequence ID" value="AAO89462.1"/>
    <property type="molecule type" value="Genomic_DNA"/>
</dbReference>
<dbReference type="PIR" id="A34152">
    <property type="entry name" value="TVVZVW"/>
</dbReference>
<dbReference type="RefSeq" id="YP_233065.1">
    <property type="nucleotide sequence ID" value="NC_006998.1"/>
</dbReference>
<dbReference type="SMR" id="P16913"/>
<dbReference type="BioGRID" id="3509008">
    <property type="interactions" value="3"/>
</dbReference>
<dbReference type="DIP" id="DIP-2170N"/>
<dbReference type="IntAct" id="P16913">
    <property type="interactions" value="1"/>
</dbReference>
<dbReference type="MINT" id="P16913"/>
<dbReference type="DNASU" id="3707654"/>
<dbReference type="GeneID" id="3707654"/>
<dbReference type="KEGG" id="vg:3707654"/>
<dbReference type="BRENDA" id="2.7.11.1">
    <property type="organism ID" value="6591"/>
</dbReference>
<dbReference type="Proteomes" id="UP000000344">
    <property type="component" value="Genome"/>
</dbReference>
<dbReference type="GO" id="GO:0030430">
    <property type="term" value="C:host cell cytoplasm"/>
    <property type="evidence" value="ECO:0007669"/>
    <property type="project" value="UniProtKB-SubCell"/>
</dbReference>
<dbReference type="GO" id="GO:0044423">
    <property type="term" value="C:virion component"/>
    <property type="evidence" value="ECO:0007669"/>
    <property type="project" value="UniProtKB-KW"/>
</dbReference>
<dbReference type="GO" id="GO:0005524">
    <property type="term" value="F:ATP binding"/>
    <property type="evidence" value="ECO:0007669"/>
    <property type="project" value="UniProtKB-KW"/>
</dbReference>
<dbReference type="GO" id="GO:0004672">
    <property type="term" value="F:protein kinase activity"/>
    <property type="evidence" value="ECO:0000314"/>
    <property type="project" value="UniProtKB"/>
</dbReference>
<dbReference type="GO" id="GO:0106310">
    <property type="term" value="F:protein serine kinase activity"/>
    <property type="evidence" value="ECO:0007669"/>
    <property type="project" value="RHEA"/>
</dbReference>
<dbReference type="GO" id="GO:0004674">
    <property type="term" value="F:protein serine/threonine kinase activity"/>
    <property type="evidence" value="ECO:0007669"/>
    <property type="project" value="UniProtKB-KW"/>
</dbReference>
<dbReference type="GO" id="GO:0019068">
    <property type="term" value="P:virion assembly"/>
    <property type="evidence" value="ECO:0000314"/>
    <property type="project" value="UniProtKB"/>
</dbReference>
<dbReference type="FunFam" id="1.10.510.10:FF:000892">
    <property type="entry name" value="Ser/Thr kinase"/>
    <property type="match status" value="1"/>
</dbReference>
<dbReference type="Gene3D" id="1.10.510.10">
    <property type="entry name" value="Transferase(Phosphotransferase) domain 1"/>
    <property type="match status" value="1"/>
</dbReference>
<dbReference type="InterPro" id="IPR050235">
    <property type="entry name" value="CK1_Ser-Thr_kinase"/>
</dbReference>
<dbReference type="InterPro" id="IPR011009">
    <property type="entry name" value="Kinase-like_dom_sf"/>
</dbReference>
<dbReference type="InterPro" id="IPR000719">
    <property type="entry name" value="Prot_kinase_dom"/>
</dbReference>
<dbReference type="InterPro" id="IPR008271">
    <property type="entry name" value="Ser/Thr_kinase_AS"/>
</dbReference>
<dbReference type="PANTHER" id="PTHR11909">
    <property type="entry name" value="CASEIN KINASE-RELATED"/>
    <property type="match status" value="1"/>
</dbReference>
<dbReference type="Pfam" id="PF00069">
    <property type="entry name" value="Pkinase"/>
    <property type="match status" value="1"/>
</dbReference>
<dbReference type="SMART" id="SM00220">
    <property type="entry name" value="S_TKc"/>
    <property type="match status" value="1"/>
</dbReference>
<dbReference type="SUPFAM" id="SSF56112">
    <property type="entry name" value="Protein kinase-like (PK-like)"/>
    <property type="match status" value="1"/>
</dbReference>
<dbReference type="PROSITE" id="PS50011">
    <property type="entry name" value="PROTEIN_KINASE_DOM"/>
    <property type="match status" value="1"/>
</dbReference>
<dbReference type="PROSITE" id="PS00108">
    <property type="entry name" value="PROTEIN_KINASE_ST"/>
    <property type="match status" value="1"/>
</dbReference>
<protein>
    <recommendedName>
        <fullName>B1 kinase</fullName>
    </recommendedName>
    <alternativeName>
        <fullName>Serine/threonine-protein kinase 1</fullName>
        <ecNumber evidence="6">2.7.11.1</ecNumber>
    </alternativeName>
    <alternativeName>
        <fullName>Vaccinia protein kinase 1</fullName>
    </alternativeName>
</protein>
<sequence>MNFQGLVLTDNCKNQWVVGPLIGKGGFGSIYTTNDNNYVVKIEPKANGSLFTEQAFYTRVLKPSVIEEWKKSHNIKHVGLITCKAFGLYKSINVEYRFLVINRLGADLDAVIRANNNRLPKRSVMLIGIEILNTIQFMHEQGYSHGDIKASNIVLDQIDKNKLYLVDYGLVSKFMSNGEHVPFIRNPNKMDNGTLEFTPIDSHKGYVVSRRGDLETLGYCMIRWLGGILPWTKISETKNCALVSATKQKYVNNTATLLMTSLQYAPRELLQYITMVNSLTYFEEPNYDEFRHILMQGVYY</sequence>
<name>PG187_VACCW</name>
<keyword id="KW-0067">ATP-binding</keyword>
<keyword id="KW-0244">Early protein</keyword>
<keyword id="KW-1035">Host cytoplasm</keyword>
<keyword id="KW-0418">Kinase</keyword>
<keyword id="KW-0460">Magnesium</keyword>
<keyword id="KW-0547">Nucleotide-binding</keyword>
<keyword id="KW-0597">Phosphoprotein</keyword>
<keyword id="KW-1185">Reference proteome</keyword>
<keyword id="KW-0723">Serine/threonine-protein kinase</keyword>
<keyword id="KW-0808">Transferase</keyword>
<keyword id="KW-1188">Viral release from host cell</keyword>
<keyword id="KW-0946">Virion</keyword>
<organismHost>
    <name type="scientific">Bos taurus</name>
    <name type="common">Bovine</name>
    <dbReference type="NCBI Taxonomy" id="9913"/>
</organismHost>
<organism>
    <name type="scientific">Vaccinia virus (strain Western Reserve)</name>
    <name type="common">VACV</name>
    <name type="synonym">Vaccinia virus (strain WR)</name>
    <dbReference type="NCBI Taxonomy" id="10254"/>
    <lineage>
        <taxon>Viruses</taxon>
        <taxon>Varidnaviria</taxon>
        <taxon>Bamfordvirae</taxon>
        <taxon>Nucleocytoviricota</taxon>
        <taxon>Pokkesviricetes</taxon>
        <taxon>Chitovirales</taxon>
        <taxon>Poxviridae</taxon>
        <taxon>Chordopoxvirinae</taxon>
        <taxon>Orthopoxvirus</taxon>
        <taxon>Vaccinia virus</taxon>
    </lineage>
</organism>
<reference key="1">
    <citation type="journal article" date="1989" name="J. Biol. Chem.">
        <title>Vaccinia virus encodes an essential gene with strong homology to protein kinases.</title>
        <authorList>
            <person name="Traktman P."/>
            <person name="Anderson M.K."/>
            <person name="Rempel R.E."/>
        </authorList>
    </citation>
    <scope>NUCLEOTIDE SEQUENCE [GENOMIC DNA]</scope>
</reference>
<reference key="2">
    <citation type="journal article" date="1989" name="J. Gen. Virol.">
        <title>Two early vaccinia virus genes encode polypeptides related to protein kinases.</title>
        <authorList>
            <person name="Howard S.T."/>
            <person name="Smith G.L."/>
        </authorList>
    </citation>
    <scope>NUCLEOTIDE SEQUENCE [GENOMIC DNA]</scope>
</reference>
<reference key="3">
    <citation type="journal article" date="1991" name="J. Gen. Virol.">
        <title>Nucleotide sequence of 42 kbp of vaccinia virus strain WR from near the right inverted terminal repeat.</title>
        <authorList>
            <person name="Smith G.L."/>
            <person name="Chan Y.S."/>
            <person name="Howard S.T."/>
        </authorList>
    </citation>
    <scope>NUCLEOTIDE SEQUENCE [GENOMIC DNA]</scope>
</reference>
<reference key="4">
    <citation type="submission" date="2003-02" db="EMBL/GenBank/DDBJ databases">
        <title>Sequencing of the coding region of vaccinia-WR to an average 9-fold redundancy and an error rate of 0.16/10kb.</title>
        <authorList>
            <person name="Esposito J.J."/>
            <person name="Frace A.M."/>
            <person name="Sammons S.A."/>
            <person name="Olsen-Rasmussen M."/>
            <person name="Osborne J."/>
            <person name="Wohlhueter R."/>
        </authorList>
    </citation>
    <scope>NUCLEOTIDE SEQUENCE [LARGE SCALE GENOMIC DNA]</scope>
</reference>
<reference key="5">
    <citation type="journal article" date="1992" name="Virology">
        <title>Vaccinia virus gene B1R encodes a 34-kDa serine/threonine protein kinase that localizes in cytoplasmic factories and is packaged into virions.</title>
        <authorList>
            <person name="Banham A.H."/>
            <person name="Smith G.L."/>
        </authorList>
    </citation>
    <scope>SUBCELLULAR LOCATION</scope>
</reference>
<reference key="6">
    <citation type="journal article" date="1992" name="J. Virol.">
        <title>The vaccinia virus B1R gene product is a serine/threonine protein kinase.</title>
        <authorList>
            <person name="Lin S."/>
            <person name="Chen W."/>
            <person name="Broyles S.S."/>
        </authorList>
    </citation>
    <scope>FUNCTION</scope>
</reference>
<reference key="7">
    <citation type="journal article" date="1992" name="J. Virol.">
        <title>Vaccinia virus B1 kinase: phenotypic analysis of temperature-sensitive mutants and enzymatic characterization of recombinant proteins.</title>
        <authorList>
            <person name="Rempel R.E."/>
            <person name="Traktman P."/>
        </authorList>
    </citation>
    <scope>FUNCTION</scope>
    <scope>COFACTOR</scope>
    <scope>MUTAGENESIS OF GLY-79 AND GLY-227</scope>
    <source>
        <strain>mutant ts2</strain>
        <strain>mutant ts25</strain>
    </source>
</reference>
<reference key="8">
    <citation type="journal article" date="2001" name="J. Virol.">
        <title>Regulation of viral intermediate gene expression by the vaccinia virus B1 protein kinase.</title>
        <authorList>
            <person name="Kovacs G.R."/>
            <person name="Vasilakis N."/>
            <person name="Moss B."/>
        </authorList>
    </citation>
    <scope>FUNCTION</scope>
    <scope>MUTAGENESIS OF GLY-227</scope>
</reference>
<reference key="9">
    <citation type="journal article" date="2006" name="J. Virol.">
        <title>Vaccinia virus B1R kinase interacts with JIP1 and modulates c-Jun-dependent signaling.</title>
        <authorList>
            <person name="Santos C.R."/>
            <person name="Blanco S."/>
            <person name="Sevilla A."/>
            <person name="Lazo P.A."/>
        </authorList>
    </citation>
    <scope>FUNCTION</scope>
    <scope>INTERACTION WITH HOST JIP1</scope>
</reference>
<reference key="10">
    <citation type="journal article" date="2007" name="Cell Host Microbe">
        <title>Poxviral B1 kinase overcomes barrier to autointegration factor, a host defense against virus replication.</title>
        <authorList>
            <person name="Wiebe M.S."/>
            <person name="Traktman P."/>
        </authorList>
    </citation>
    <scope>FUNCTION</scope>
</reference>
<reference key="11">
    <citation type="journal article" date="2013" name="Virology">
        <title>Barrier to autointegration factor (BAF) inhibits vaccinia virus intermediate transcription in the absence of the viral B1 kinase.</title>
        <authorList>
            <person name="Ibrahim N."/>
            <person name="Wicklund A."/>
            <person name="Jamin A."/>
            <person name="Wiebe M.S."/>
        </authorList>
    </citation>
    <scope>FUNCTION</scope>
</reference>
<reference key="12">
    <citation type="journal article" date="2014" name="J. Virol.">
        <title>Cell- and virus-mediated regulation of the barrier-to-autointegration factor's phosphorylation state controls its DNA binding, dimerization, subcellular localization, and antipoxviral activity.</title>
        <authorList>
            <person name="Jamin A."/>
            <person name="Wicklund A."/>
            <person name="Wiebe M.S."/>
        </authorList>
    </citation>
    <scope>FUNCTION</scope>
</reference>
<reference key="13">
    <citation type="journal article" date="2015" name="J. Virol.">
        <title>Vaccinia virus B1 kinase is required for postreplicative stages of the viral life cycle in a BAF-Independent manner in U2OS cells.</title>
        <authorList>
            <person name="Jamin A."/>
            <person name="Ibrahim N."/>
            <person name="Wicklund A."/>
            <person name="Weskamp K."/>
            <person name="Wiebe M.S."/>
        </authorList>
    </citation>
    <scope>FUNCTION</scope>
</reference>
<reference key="14">
    <citation type="journal article" date="2017" name="Nature">
        <title>Trans-kingdom mimicry underlies ribosome customization by a poxvirus kinase.</title>
        <authorList>
            <person name="Jha S."/>
            <person name="Rollins M.G."/>
            <person name="Fuchs G."/>
            <person name="Procter D.J."/>
            <person name="Hall E.A."/>
            <person name="Cozzolino K."/>
            <person name="Sarnow P."/>
            <person name="Savas J.N."/>
            <person name="Walsh D."/>
        </authorList>
    </citation>
    <scope>FUNCTION</scope>
</reference>
<reference key="15">
    <citation type="journal article" date="2017" name="J. Virol.">
        <title>Deletion of the vaccinia virus B1 kinase reveals essential functions of this enzyme complemented partly by the homologous cellular kinase VRK2.</title>
        <authorList>
            <person name="Olson A.T."/>
            <person name="Rico A.B."/>
            <person name="Wang Z."/>
            <person name="Delhon G."/>
            <person name="Wiebe M.S."/>
        </authorList>
    </citation>
    <scope>DISRUPTION PHENOTYPE</scope>
</reference>
<reference key="16">
    <citation type="journal article" date="2019" name="J. Virol.">
        <title>The Vaccinia Virus (VACV) B1 and Cellular VRK2 Kinases Promote VACV Replication Factory Formation through Phosphorylation-Dependent Inhibition of VACV B12.</title>
        <authorList>
            <person name="Rico A.B."/>
            <person name="Wang Z."/>
            <person name="Olson A.T."/>
            <person name="Linville A.C."/>
            <person name="Bullard B.L."/>
            <person name="Weaver E.A."/>
            <person name="Jones C."/>
            <person name="Wiebe M.S."/>
        </authorList>
    </citation>
    <scope>FUNCTION</scope>
    <scope>INTERACTION WITH OPG198</scope>
</reference>
<gene>
    <name type="primary">OPG187</name>
    <name type="synonym">VPK1</name>
    <name type="ordered locus">VACWR183</name>
    <name type="ORF">B1R</name>
</gene>
<comment type="function">
    <text evidence="3 5 6 7 8 9 10 11 13 14">Essential serine/threonine-protein kinase that plays different role in the viral life cycle (PubMed:1560522, PubMed:1602551). Phosphorylates the host small ribosomal protein RACK1 thereby customizing the ribosomes to a state optimal for viral mRNAs (which contain poly-A leaders) but not for host mRNAs (PubMed:28636603). Facilitates viral DNA replication by inhibiting host BANF1, a cellular host defense responsive to foreign DNA (PubMed:1602551, PubMed:18005698). Phosphorylates host BANF1 on serine and threonine residues; this leads to BANF1 relocalization to the cytoplasm, loss of dimerization and impaired DNA binding activity (PubMed:24600006). Indeed, BANF1 activity depends on its DNA-binding property which is blocked by VPK1-mediated phosphorylation (PubMed:18005698). Required for viral intermediate genes expression, probably by inhibiting host BANF1 (PubMed:11287554, PubMed:23891157). Modulates cellular responses via host JUN by two different mechanisms, either by direct phosphorylation or by modulation of upstream JIP1-MAPK complexes (PubMed:16840345). Seems to participate in the accumulation/processing of late proteins and thus in virion maturation (PubMed:26223647). In addition, inhibits B12 repressive activity on viral DNA replication via a phosphorylation-dependent mechanism (PubMed:31341052).</text>
</comment>
<comment type="catalytic activity">
    <reaction evidence="6">
        <text>L-seryl-[protein] + ATP = O-phospho-L-seryl-[protein] + ADP + H(+)</text>
        <dbReference type="Rhea" id="RHEA:17989"/>
        <dbReference type="Rhea" id="RHEA-COMP:9863"/>
        <dbReference type="Rhea" id="RHEA-COMP:11604"/>
        <dbReference type="ChEBI" id="CHEBI:15378"/>
        <dbReference type="ChEBI" id="CHEBI:29999"/>
        <dbReference type="ChEBI" id="CHEBI:30616"/>
        <dbReference type="ChEBI" id="CHEBI:83421"/>
        <dbReference type="ChEBI" id="CHEBI:456216"/>
        <dbReference type="EC" id="2.7.11.1"/>
    </reaction>
</comment>
<comment type="catalytic activity">
    <reaction evidence="6">
        <text>L-threonyl-[protein] + ATP = O-phospho-L-threonyl-[protein] + ADP + H(+)</text>
        <dbReference type="Rhea" id="RHEA:46608"/>
        <dbReference type="Rhea" id="RHEA-COMP:11060"/>
        <dbReference type="Rhea" id="RHEA-COMP:11605"/>
        <dbReference type="ChEBI" id="CHEBI:15378"/>
        <dbReference type="ChEBI" id="CHEBI:30013"/>
        <dbReference type="ChEBI" id="CHEBI:30616"/>
        <dbReference type="ChEBI" id="CHEBI:61977"/>
        <dbReference type="ChEBI" id="CHEBI:456216"/>
        <dbReference type="EC" id="2.7.11.1"/>
    </reaction>
</comment>
<comment type="cofactor">
    <cofactor evidence="6">
        <name>Mg(2+)</name>
        <dbReference type="ChEBI" id="CHEBI:18420"/>
    </cofactor>
</comment>
<comment type="subunit">
    <text evidence="7 14">Interacts with host JIP1; this interaction increases the amount of MAPK bound to JIP1 and subsequently increases the activity of transcription factors, such as JUN, that respond to these complexes. Interacts with protein OPG198; this interaction inhibits the repressive activity of OPG198 pseudokinase on viral replication factory formation (PubMed:31341052).</text>
</comment>
<comment type="subcellular location">
    <subcellularLocation>
        <location evidence="4">Virion</location>
    </subcellularLocation>
    <subcellularLocation>
        <location evidence="4">Host cytoplasm</location>
    </subcellularLocation>
    <text evidence="4">Localizes in cytoplasmic viral factories and is a minor component of the virion.</text>
</comment>
<comment type="induction">
    <text>Expressed in the early phase of the viral replicative cycle.</text>
</comment>
<comment type="PTM">
    <text>Autophosphorylated.</text>
</comment>
<comment type="disruption phenotype">
    <text evidence="12">Up to 650-fold decreased virus production.</text>
</comment>
<comment type="similarity">
    <text evidence="1">Belongs to the protein kinase superfamily. Ser/Thr protein kinase family. Poxviruses subfamily.</text>
</comment>
<evidence type="ECO:0000255" key="1">
    <source>
        <dbReference type="PROSITE-ProRule" id="PRU00159"/>
    </source>
</evidence>
<evidence type="ECO:0000255" key="2">
    <source>
        <dbReference type="PROSITE-ProRule" id="PRU10027"/>
    </source>
</evidence>
<evidence type="ECO:0000269" key="3">
    <source>
    </source>
</evidence>
<evidence type="ECO:0000269" key="4">
    <source>
    </source>
</evidence>
<evidence type="ECO:0000269" key="5">
    <source>
    </source>
</evidence>
<evidence type="ECO:0000269" key="6">
    <source>
    </source>
</evidence>
<evidence type="ECO:0000269" key="7">
    <source>
    </source>
</evidence>
<evidence type="ECO:0000269" key="8">
    <source>
    </source>
</evidence>
<evidence type="ECO:0000269" key="9">
    <source>
    </source>
</evidence>
<evidence type="ECO:0000269" key="10">
    <source>
    </source>
</evidence>
<evidence type="ECO:0000269" key="11">
    <source>
    </source>
</evidence>
<evidence type="ECO:0000269" key="12">
    <source>
    </source>
</evidence>
<evidence type="ECO:0000269" key="13">
    <source>
    </source>
</evidence>
<evidence type="ECO:0000269" key="14">
    <source>
    </source>
</evidence>
<feature type="chain" id="PRO_0000086792" description="B1 kinase">
    <location>
        <begin position="1"/>
        <end position="300"/>
    </location>
</feature>
<feature type="domain" description="Protein kinase" evidence="1">
    <location>
        <begin position="16"/>
        <end position="282"/>
    </location>
</feature>
<feature type="active site" description="Proton acceptor" evidence="1 2">
    <location>
        <position position="147"/>
    </location>
</feature>
<feature type="binding site" evidence="1">
    <location>
        <begin position="22"/>
        <end position="30"/>
    </location>
    <ligand>
        <name>ATP</name>
        <dbReference type="ChEBI" id="CHEBI:30616"/>
    </ligand>
</feature>
<feature type="binding site" evidence="1">
    <location>
        <position position="45"/>
    </location>
    <ligand>
        <name>ATP</name>
        <dbReference type="ChEBI" id="CHEBI:30616"/>
    </ligand>
</feature>
<feature type="mutagenesis site" description="Complete loss of enzymatic activity and loss of viral intermediate gene expression (mutant ts2)." evidence="3 6">
    <original>G</original>
    <variation>D</variation>
    <location>
        <position position="79"/>
    </location>
</feature>
<feature type="mutagenesis site" description="97% loss of enzymatic activity (mutant ts25)." evidence="6">
    <original>G</original>
    <variation>S</variation>
    <location>
        <position position="227"/>
    </location>
</feature>
<proteinExistence type="evidence at protein level"/>